<evidence type="ECO:0000255" key="1">
    <source>
        <dbReference type="HAMAP-Rule" id="MF_00074"/>
    </source>
</evidence>
<feature type="chain" id="PRO_0000335311" description="Ribosomal RNA small subunit methyltransferase G">
    <location>
        <begin position="1"/>
        <end position="224"/>
    </location>
</feature>
<feature type="binding site" evidence="1">
    <location>
        <position position="89"/>
    </location>
    <ligand>
        <name>S-adenosyl-L-methionine</name>
        <dbReference type="ChEBI" id="CHEBI:59789"/>
    </ligand>
</feature>
<feature type="binding site" evidence="1">
    <location>
        <position position="94"/>
    </location>
    <ligand>
        <name>S-adenosyl-L-methionine</name>
        <dbReference type="ChEBI" id="CHEBI:59789"/>
    </ligand>
</feature>
<feature type="binding site" evidence="1">
    <location>
        <begin position="140"/>
        <end position="141"/>
    </location>
    <ligand>
        <name>S-adenosyl-L-methionine</name>
        <dbReference type="ChEBI" id="CHEBI:59789"/>
    </ligand>
</feature>
<feature type="binding site" evidence="1">
    <location>
        <position position="153"/>
    </location>
    <ligand>
        <name>S-adenosyl-L-methionine</name>
        <dbReference type="ChEBI" id="CHEBI:59789"/>
    </ligand>
</feature>
<gene>
    <name evidence="1" type="primary">rsmG</name>
    <name type="ordered locus">BF2027</name>
</gene>
<reference key="1">
    <citation type="journal article" date="2004" name="Proc. Natl. Acad. Sci. U.S.A.">
        <title>Genomic analysis of Bacteroides fragilis reveals extensive DNA inversions regulating cell surface adaptation.</title>
        <authorList>
            <person name="Kuwahara T."/>
            <person name="Yamashita A."/>
            <person name="Hirakawa H."/>
            <person name="Nakayama H."/>
            <person name="Toh H."/>
            <person name="Okada N."/>
            <person name="Kuhara S."/>
            <person name="Hattori M."/>
            <person name="Hayashi T."/>
            <person name="Ohnishi Y."/>
        </authorList>
    </citation>
    <scope>NUCLEOTIDE SEQUENCE [LARGE SCALE GENOMIC DNA]</scope>
    <source>
        <strain>YCH46</strain>
    </source>
</reference>
<sequence>MNTTEQTSSLPSAGGENGVKLLLKYFPDLTEEQRKQFAALYELYIDWNSKINVISRKDIENLYEHHVLHSLGIARIIRFRAGSSVMDLGTGGGFPGIPLAILFPDTKFHLVDSIGKKVRVATEVANAIGLKNVTFRHARAEEEKQTFDFVVSRAVMPLADLIKIIRKNISPKQQNALPNGLICLKGGELEHEAMPFKHKTSMHNLNEDFDEEFFQTKKVVYVTI</sequence>
<protein>
    <recommendedName>
        <fullName evidence="1">Ribosomal RNA small subunit methyltransferase G</fullName>
        <ecNumber evidence="1">2.1.1.-</ecNumber>
    </recommendedName>
    <alternativeName>
        <fullName evidence="1">16S rRNA 7-methylguanosine methyltransferase</fullName>
        <shortName evidence="1">16S rRNA m7G methyltransferase</shortName>
    </alternativeName>
</protein>
<proteinExistence type="inferred from homology"/>
<accession>Q64UQ5</accession>
<comment type="function">
    <text evidence="1">Specifically methylates the N7 position of a guanine in 16S rRNA.</text>
</comment>
<comment type="subcellular location">
    <subcellularLocation>
        <location evidence="1">Cytoplasm</location>
    </subcellularLocation>
</comment>
<comment type="similarity">
    <text evidence="1">Belongs to the methyltransferase superfamily. RNA methyltransferase RsmG family.</text>
</comment>
<keyword id="KW-0963">Cytoplasm</keyword>
<keyword id="KW-0489">Methyltransferase</keyword>
<keyword id="KW-0698">rRNA processing</keyword>
<keyword id="KW-0949">S-adenosyl-L-methionine</keyword>
<keyword id="KW-0808">Transferase</keyword>
<dbReference type="EC" id="2.1.1.-" evidence="1"/>
<dbReference type="EMBL" id="AP006841">
    <property type="protein sequence ID" value="BAD48774.1"/>
    <property type="molecule type" value="Genomic_DNA"/>
</dbReference>
<dbReference type="RefSeq" id="YP_099308.1">
    <property type="nucleotide sequence ID" value="NC_006347.1"/>
</dbReference>
<dbReference type="SMR" id="Q64UQ5"/>
<dbReference type="STRING" id="295405.BF2027"/>
<dbReference type="KEGG" id="bfr:BF2027"/>
<dbReference type="PATRIC" id="fig|295405.11.peg.1973"/>
<dbReference type="HOGENOM" id="CLU_065341_2_2_10"/>
<dbReference type="OrthoDB" id="9808773at2"/>
<dbReference type="Proteomes" id="UP000002197">
    <property type="component" value="Chromosome"/>
</dbReference>
<dbReference type="GO" id="GO:0005829">
    <property type="term" value="C:cytosol"/>
    <property type="evidence" value="ECO:0007669"/>
    <property type="project" value="TreeGrafter"/>
</dbReference>
<dbReference type="GO" id="GO:0070043">
    <property type="term" value="F:rRNA (guanine-N7-)-methyltransferase activity"/>
    <property type="evidence" value="ECO:0007669"/>
    <property type="project" value="UniProtKB-UniRule"/>
</dbReference>
<dbReference type="CDD" id="cd02440">
    <property type="entry name" value="AdoMet_MTases"/>
    <property type="match status" value="1"/>
</dbReference>
<dbReference type="FunFam" id="3.40.50.150:FF:000429">
    <property type="entry name" value="Ribosomal RNA small subunit methyltransferase G"/>
    <property type="match status" value="1"/>
</dbReference>
<dbReference type="Gene3D" id="3.40.50.150">
    <property type="entry name" value="Vaccinia Virus protein VP39"/>
    <property type="match status" value="1"/>
</dbReference>
<dbReference type="HAMAP" id="MF_00074">
    <property type="entry name" value="16SrRNA_methyltr_G"/>
    <property type="match status" value="1"/>
</dbReference>
<dbReference type="InterPro" id="IPR003682">
    <property type="entry name" value="rRNA_ssu_MeTfrase_G"/>
</dbReference>
<dbReference type="InterPro" id="IPR029063">
    <property type="entry name" value="SAM-dependent_MTases_sf"/>
</dbReference>
<dbReference type="NCBIfam" id="TIGR00138">
    <property type="entry name" value="rsmG_gidB"/>
    <property type="match status" value="1"/>
</dbReference>
<dbReference type="PANTHER" id="PTHR31760">
    <property type="entry name" value="S-ADENOSYL-L-METHIONINE-DEPENDENT METHYLTRANSFERASES SUPERFAMILY PROTEIN"/>
    <property type="match status" value="1"/>
</dbReference>
<dbReference type="PANTHER" id="PTHR31760:SF0">
    <property type="entry name" value="S-ADENOSYL-L-METHIONINE-DEPENDENT METHYLTRANSFERASES SUPERFAMILY PROTEIN"/>
    <property type="match status" value="1"/>
</dbReference>
<dbReference type="Pfam" id="PF02527">
    <property type="entry name" value="GidB"/>
    <property type="match status" value="1"/>
</dbReference>
<dbReference type="PIRSF" id="PIRSF003078">
    <property type="entry name" value="GidB"/>
    <property type="match status" value="1"/>
</dbReference>
<dbReference type="SUPFAM" id="SSF53335">
    <property type="entry name" value="S-adenosyl-L-methionine-dependent methyltransferases"/>
    <property type="match status" value="1"/>
</dbReference>
<organism>
    <name type="scientific">Bacteroides fragilis (strain YCH46)</name>
    <dbReference type="NCBI Taxonomy" id="295405"/>
    <lineage>
        <taxon>Bacteria</taxon>
        <taxon>Pseudomonadati</taxon>
        <taxon>Bacteroidota</taxon>
        <taxon>Bacteroidia</taxon>
        <taxon>Bacteroidales</taxon>
        <taxon>Bacteroidaceae</taxon>
        <taxon>Bacteroides</taxon>
    </lineage>
</organism>
<name>RSMG_BACFR</name>